<protein>
    <recommendedName>
        <fullName evidence="1">Undecaprenyl-phosphate 4-deoxy-4-formamido-L-arabinose transferase</fullName>
        <ecNumber evidence="1">2.4.2.53</ecNumber>
    </recommendedName>
    <alternativeName>
        <fullName evidence="1">Undecaprenyl-phosphate Ara4FN transferase</fullName>
        <shortName evidence="1">Ara4FN transferase</shortName>
    </alternativeName>
</protein>
<accession>B5RCC3</accession>
<gene>
    <name evidence="1" type="primary">arnC</name>
    <name type="ordered locus">SG2327</name>
</gene>
<proteinExistence type="inferred from homology"/>
<organism>
    <name type="scientific">Salmonella gallinarum (strain 287/91 / NCTC 13346)</name>
    <dbReference type="NCBI Taxonomy" id="550538"/>
    <lineage>
        <taxon>Bacteria</taxon>
        <taxon>Pseudomonadati</taxon>
        <taxon>Pseudomonadota</taxon>
        <taxon>Gammaproteobacteria</taxon>
        <taxon>Enterobacterales</taxon>
        <taxon>Enterobacteriaceae</taxon>
        <taxon>Salmonella</taxon>
    </lineage>
</organism>
<name>ARNC_SALG2</name>
<reference key="1">
    <citation type="journal article" date="2008" name="Genome Res.">
        <title>Comparative genome analysis of Salmonella enteritidis PT4 and Salmonella gallinarum 287/91 provides insights into evolutionary and host adaptation pathways.</title>
        <authorList>
            <person name="Thomson N.R."/>
            <person name="Clayton D.J."/>
            <person name="Windhorst D."/>
            <person name="Vernikos G."/>
            <person name="Davidson S."/>
            <person name="Churcher C."/>
            <person name="Quail M.A."/>
            <person name="Stevens M."/>
            <person name="Jones M.A."/>
            <person name="Watson M."/>
            <person name="Barron A."/>
            <person name="Layton A."/>
            <person name="Pickard D."/>
            <person name="Kingsley R.A."/>
            <person name="Bignell A."/>
            <person name="Clark L."/>
            <person name="Harris B."/>
            <person name="Ormond D."/>
            <person name="Abdellah Z."/>
            <person name="Brooks K."/>
            <person name="Cherevach I."/>
            <person name="Chillingworth T."/>
            <person name="Woodward J."/>
            <person name="Norberczak H."/>
            <person name="Lord A."/>
            <person name="Arrowsmith C."/>
            <person name="Jagels K."/>
            <person name="Moule S."/>
            <person name="Mungall K."/>
            <person name="Saunders M."/>
            <person name="Whitehead S."/>
            <person name="Chabalgoity J.A."/>
            <person name="Maskell D."/>
            <person name="Humphreys T."/>
            <person name="Roberts M."/>
            <person name="Barrow P.A."/>
            <person name="Dougan G."/>
            <person name="Parkhill J."/>
        </authorList>
    </citation>
    <scope>NUCLEOTIDE SEQUENCE [LARGE SCALE GENOMIC DNA]</scope>
    <source>
        <strain>287/91 / NCTC 13346</strain>
    </source>
</reference>
<keyword id="KW-0046">Antibiotic resistance</keyword>
<keyword id="KW-0997">Cell inner membrane</keyword>
<keyword id="KW-1003">Cell membrane</keyword>
<keyword id="KW-0328">Glycosyltransferase</keyword>
<keyword id="KW-0441">Lipid A biosynthesis</keyword>
<keyword id="KW-0444">Lipid biosynthesis</keyword>
<keyword id="KW-0443">Lipid metabolism</keyword>
<keyword id="KW-0448">Lipopolysaccharide biosynthesis</keyword>
<keyword id="KW-0472">Membrane</keyword>
<keyword id="KW-0808">Transferase</keyword>
<keyword id="KW-0812">Transmembrane</keyword>
<keyword id="KW-1133">Transmembrane helix</keyword>
<dbReference type="EC" id="2.4.2.53" evidence="1"/>
<dbReference type="EMBL" id="AM933173">
    <property type="protein sequence ID" value="CAR38157.1"/>
    <property type="molecule type" value="Genomic_DNA"/>
</dbReference>
<dbReference type="RefSeq" id="WP_000458887.1">
    <property type="nucleotide sequence ID" value="NC_011274.1"/>
</dbReference>
<dbReference type="SMR" id="B5RCC3"/>
<dbReference type="CAZy" id="GT2">
    <property type="family name" value="Glycosyltransferase Family 2"/>
</dbReference>
<dbReference type="KEGG" id="seg:SG2327"/>
<dbReference type="HOGENOM" id="CLU_033536_0_0_6"/>
<dbReference type="UniPathway" id="UPA00030"/>
<dbReference type="UniPathway" id="UPA00036">
    <property type="reaction ID" value="UER00495"/>
</dbReference>
<dbReference type="Proteomes" id="UP000008321">
    <property type="component" value="Chromosome"/>
</dbReference>
<dbReference type="GO" id="GO:0005886">
    <property type="term" value="C:plasma membrane"/>
    <property type="evidence" value="ECO:0007669"/>
    <property type="project" value="UniProtKB-SubCell"/>
</dbReference>
<dbReference type="GO" id="GO:0016780">
    <property type="term" value="F:phosphotransferase activity, for other substituted phosphate groups"/>
    <property type="evidence" value="ECO:0007669"/>
    <property type="project" value="UniProtKB-UniRule"/>
</dbReference>
<dbReference type="GO" id="GO:0099621">
    <property type="term" value="F:undecaprenyl-phosphate 4-deoxy-4-formamido-L-arabinose transferase activity"/>
    <property type="evidence" value="ECO:0007669"/>
    <property type="project" value="UniProtKB-EC"/>
</dbReference>
<dbReference type="GO" id="GO:0036108">
    <property type="term" value="P:4-amino-4-deoxy-alpha-L-arabinopyranosyl undecaprenyl phosphate biosynthetic process"/>
    <property type="evidence" value="ECO:0007669"/>
    <property type="project" value="UniProtKB-UniRule"/>
</dbReference>
<dbReference type="GO" id="GO:0009245">
    <property type="term" value="P:lipid A biosynthetic process"/>
    <property type="evidence" value="ECO:0007669"/>
    <property type="project" value="UniProtKB-UniRule"/>
</dbReference>
<dbReference type="GO" id="GO:0009103">
    <property type="term" value="P:lipopolysaccharide biosynthetic process"/>
    <property type="evidence" value="ECO:0007669"/>
    <property type="project" value="UniProtKB-UniRule"/>
</dbReference>
<dbReference type="GO" id="GO:0046677">
    <property type="term" value="P:response to antibiotic"/>
    <property type="evidence" value="ECO:0007669"/>
    <property type="project" value="UniProtKB-KW"/>
</dbReference>
<dbReference type="CDD" id="cd04187">
    <property type="entry name" value="DPM1_like_bac"/>
    <property type="match status" value="1"/>
</dbReference>
<dbReference type="FunFam" id="3.90.550.10:FF:000019">
    <property type="entry name" value="Undecaprenyl-phosphate 4-deoxy-4-formamido-L-arabinose transferase"/>
    <property type="match status" value="1"/>
</dbReference>
<dbReference type="Gene3D" id="3.90.550.10">
    <property type="entry name" value="Spore Coat Polysaccharide Biosynthesis Protein SpsA, Chain A"/>
    <property type="match status" value="1"/>
</dbReference>
<dbReference type="HAMAP" id="MF_01164">
    <property type="entry name" value="ArnC_transfer"/>
    <property type="match status" value="1"/>
</dbReference>
<dbReference type="InterPro" id="IPR022857">
    <property type="entry name" value="ArnC_tfrase"/>
</dbReference>
<dbReference type="InterPro" id="IPR001173">
    <property type="entry name" value="Glyco_trans_2-like"/>
</dbReference>
<dbReference type="InterPro" id="IPR050256">
    <property type="entry name" value="Glycosyltransferase_2"/>
</dbReference>
<dbReference type="InterPro" id="IPR029044">
    <property type="entry name" value="Nucleotide-diphossugar_trans"/>
</dbReference>
<dbReference type="NCBIfam" id="NF007986">
    <property type="entry name" value="PRK10714.1"/>
    <property type="match status" value="1"/>
</dbReference>
<dbReference type="PANTHER" id="PTHR48090:SF3">
    <property type="entry name" value="UNDECAPRENYL-PHOSPHATE 4-DEOXY-4-FORMAMIDO-L-ARABINOSE TRANSFERASE"/>
    <property type="match status" value="1"/>
</dbReference>
<dbReference type="PANTHER" id="PTHR48090">
    <property type="entry name" value="UNDECAPRENYL-PHOSPHATE 4-DEOXY-4-FORMAMIDO-L-ARABINOSE TRANSFERASE-RELATED"/>
    <property type="match status" value="1"/>
</dbReference>
<dbReference type="Pfam" id="PF00535">
    <property type="entry name" value="Glycos_transf_2"/>
    <property type="match status" value="1"/>
</dbReference>
<dbReference type="SUPFAM" id="SSF53448">
    <property type="entry name" value="Nucleotide-diphospho-sugar transferases"/>
    <property type="match status" value="1"/>
</dbReference>
<comment type="function">
    <text evidence="1">Catalyzes the transfer of 4-deoxy-4-formamido-L-arabinose from UDP to undecaprenyl phosphate. The modified arabinose is attached to lipid A and is required for resistance to polymyxin and cationic antimicrobial peptides.</text>
</comment>
<comment type="catalytic activity">
    <reaction evidence="1">
        <text>UDP-4-deoxy-4-formamido-beta-L-arabinose + di-trans,octa-cis-undecaprenyl phosphate = 4-deoxy-4-formamido-alpha-L-arabinopyranosyl di-trans,octa-cis-undecaprenyl phosphate + UDP</text>
        <dbReference type="Rhea" id="RHEA:27722"/>
        <dbReference type="ChEBI" id="CHEBI:58223"/>
        <dbReference type="ChEBI" id="CHEBI:58709"/>
        <dbReference type="ChEBI" id="CHEBI:58909"/>
        <dbReference type="ChEBI" id="CHEBI:60392"/>
        <dbReference type="EC" id="2.4.2.53"/>
    </reaction>
</comment>
<comment type="pathway">
    <text evidence="1">Glycolipid biosynthesis; 4-amino-4-deoxy-alpha-L-arabinose undecaprenyl phosphate biosynthesis; 4-amino-4-deoxy-alpha-L-arabinose undecaprenyl phosphate from UDP-4-deoxy-4-formamido-beta-L-arabinose and undecaprenyl phosphate: step 1/2.</text>
</comment>
<comment type="pathway">
    <text evidence="1">Bacterial outer membrane biogenesis; lipopolysaccharide biosynthesis.</text>
</comment>
<comment type="subcellular location">
    <subcellularLocation>
        <location evidence="1">Cell inner membrane</location>
        <topology evidence="1">Multi-pass membrane protein</topology>
    </subcellularLocation>
</comment>
<comment type="similarity">
    <text evidence="1">Belongs to the glycosyltransferase 2 family.</text>
</comment>
<feature type="chain" id="PRO_1000137920" description="Undecaprenyl-phosphate 4-deoxy-4-formamido-L-arabinose transferase">
    <location>
        <begin position="1"/>
        <end position="327"/>
    </location>
</feature>
<feature type="topological domain" description="Cytoplasmic" evidence="1">
    <location>
        <begin position="1"/>
        <end position="235"/>
    </location>
</feature>
<feature type="transmembrane region" description="Helical" evidence="1">
    <location>
        <begin position="236"/>
        <end position="256"/>
    </location>
</feature>
<feature type="topological domain" description="Periplasmic" evidence="1">
    <location>
        <begin position="257"/>
        <end position="269"/>
    </location>
</feature>
<feature type="transmembrane region" description="Helical" evidence="1">
    <location>
        <begin position="270"/>
        <end position="290"/>
    </location>
</feature>
<feature type="topological domain" description="Cytoplasmic" evidence="1">
    <location>
        <begin position="291"/>
        <end position="327"/>
    </location>
</feature>
<evidence type="ECO:0000255" key="1">
    <source>
        <dbReference type="HAMAP-Rule" id="MF_01164"/>
    </source>
</evidence>
<sequence length="327" mass="36486">MFDAAPIKKVSVVIPVYNEQESLPELIRRTTAACESLGKAWEILLIDDGSSDSSAELMVKASQEADSHIISILLNRNYGQHAAIMAGFSHVSGDLIITLDADLQNPPEEIPRLVAKADEGFDVVGTVRQNRQDSLFRKSASKIINLLIQRTTGKAMGDYGCMLRAYRRPIIDTMLRCHERSTFIPILANIFARRATEIPVHHAEREFGDSKYSFMRLINLMYDLVTCLTTTPLRLLSLLGSVIAIGGFSLSVLLIVLRLALGPQWAAEGVFMLFAVLFTFIGAQFIGMGLLGEYIGRIYNDVRARPRYFVQQVIYPESTPFTEESHQ</sequence>